<gene>
    <name evidence="1" type="primary">kdpA</name>
    <name type="ordered locus">Mext_0233</name>
</gene>
<proteinExistence type="inferred from homology"/>
<comment type="function">
    <text evidence="1">Part of the high-affinity ATP-driven potassium transport (or Kdp) system, which catalyzes the hydrolysis of ATP coupled with the electrogenic transport of potassium into the cytoplasm. This subunit binds the periplasmic potassium ions and delivers the ions to the membrane domain of KdpB through an intramembrane tunnel.</text>
</comment>
<comment type="subunit">
    <text evidence="1">The system is composed of three essential subunits: KdpA, KdpB and KdpC.</text>
</comment>
<comment type="subcellular location">
    <subcellularLocation>
        <location evidence="1">Cell inner membrane</location>
        <topology evidence="1">Multi-pass membrane protein</topology>
    </subcellularLocation>
</comment>
<comment type="similarity">
    <text evidence="1">Belongs to the KdpA family.</text>
</comment>
<organism>
    <name type="scientific">Methylorubrum extorquens (strain PA1)</name>
    <name type="common">Methylobacterium extorquens</name>
    <dbReference type="NCBI Taxonomy" id="419610"/>
    <lineage>
        <taxon>Bacteria</taxon>
        <taxon>Pseudomonadati</taxon>
        <taxon>Pseudomonadota</taxon>
        <taxon>Alphaproteobacteria</taxon>
        <taxon>Hyphomicrobiales</taxon>
        <taxon>Methylobacteriaceae</taxon>
        <taxon>Methylorubrum</taxon>
    </lineage>
</organism>
<keyword id="KW-0997">Cell inner membrane</keyword>
<keyword id="KW-1003">Cell membrane</keyword>
<keyword id="KW-0406">Ion transport</keyword>
<keyword id="KW-0472">Membrane</keyword>
<keyword id="KW-0630">Potassium</keyword>
<keyword id="KW-0633">Potassium transport</keyword>
<keyword id="KW-0812">Transmembrane</keyword>
<keyword id="KW-1133">Transmembrane helix</keyword>
<keyword id="KW-0813">Transport</keyword>
<name>KDPA_METEP</name>
<protein>
    <recommendedName>
        <fullName evidence="1">Potassium-transporting ATPase potassium-binding subunit</fullName>
    </recommendedName>
    <alternativeName>
        <fullName evidence="1">ATP phosphohydrolase [potassium-transporting] A chain</fullName>
    </alternativeName>
    <alternativeName>
        <fullName evidence="1">Potassium-binding and translocating subunit A</fullName>
    </alternativeName>
    <alternativeName>
        <fullName evidence="1">Potassium-translocating ATPase A chain</fullName>
    </alternativeName>
</protein>
<reference key="1">
    <citation type="submission" date="2007-12" db="EMBL/GenBank/DDBJ databases">
        <title>Complete sequence of Methylobacterium extorquens PA1.</title>
        <authorList>
            <consortium name="US DOE Joint Genome Institute"/>
            <person name="Copeland A."/>
            <person name="Lucas S."/>
            <person name="Lapidus A."/>
            <person name="Barry K."/>
            <person name="Glavina del Rio T."/>
            <person name="Dalin E."/>
            <person name="Tice H."/>
            <person name="Pitluck S."/>
            <person name="Saunders E."/>
            <person name="Brettin T."/>
            <person name="Bruce D."/>
            <person name="Detter J.C."/>
            <person name="Han C."/>
            <person name="Schmutz J."/>
            <person name="Larimer F."/>
            <person name="Land M."/>
            <person name="Hauser L."/>
            <person name="Kyrpides N."/>
            <person name="Kim E."/>
            <person name="Marx C."/>
            <person name="Richardson P."/>
        </authorList>
    </citation>
    <scope>NUCLEOTIDE SEQUENCE [LARGE SCALE GENOMIC DNA]</scope>
    <source>
        <strain>PA1</strain>
    </source>
</reference>
<accession>A9VZA2</accession>
<evidence type="ECO:0000255" key="1">
    <source>
        <dbReference type="HAMAP-Rule" id="MF_00275"/>
    </source>
</evidence>
<dbReference type="EMBL" id="CP000908">
    <property type="protein sequence ID" value="ABY28658.1"/>
    <property type="molecule type" value="Genomic_DNA"/>
</dbReference>
<dbReference type="RefSeq" id="WP_012252046.1">
    <property type="nucleotide sequence ID" value="NC_010172.1"/>
</dbReference>
<dbReference type="SMR" id="A9VZA2"/>
<dbReference type="KEGG" id="mex:Mext_0233"/>
<dbReference type="eggNOG" id="COG2060">
    <property type="taxonomic scope" value="Bacteria"/>
</dbReference>
<dbReference type="HOGENOM" id="CLU_018614_3_0_5"/>
<dbReference type="BioCyc" id="MEXT419610:MEXT_RS01120-MONOMER"/>
<dbReference type="GO" id="GO:0005886">
    <property type="term" value="C:plasma membrane"/>
    <property type="evidence" value="ECO:0007669"/>
    <property type="project" value="UniProtKB-SubCell"/>
</dbReference>
<dbReference type="GO" id="GO:0008556">
    <property type="term" value="F:P-type potassium transmembrane transporter activity"/>
    <property type="evidence" value="ECO:0007669"/>
    <property type="project" value="InterPro"/>
</dbReference>
<dbReference type="GO" id="GO:0030955">
    <property type="term" value="F:potassium ion binding"/>
    <property type="evidence" value="ECO:0007669"/>
    <property type="project" value="UniProtKB-UniRule"/>
</dbReference>
<dbReference type="HAMAP" id="MF_00275">
    <property type="entry name" value="KdpA"/>
    <property type="match status" value="1"/>
</dbReference>
<dbReference type="InterPro" id="IPR004623">
    <property type="entry name" value="KdpA"/>
</dbReference>
<dbReference type="NCBIfam" id="TIGR00680">
    <property type="entry name" value="kdpA"/>
    <property type="match status" value="1"/>
</dbReference>
<dbReference type="PANTHER" id="PTHR30607">
    <property type="entry name" value="POTASSIUM-TRANSPORTING ATPASE A CHAIN"/>
    <property type="match status" value="1"/>
</dbReference>
<dbReference type="PANTHER" id="PTHR30607:SF2">
    <property type="entry name" value="POTASSIUM-TRANSPORTING ATPASE POTASSIUM-BINDING SUBUNIT"/>
    <property type="match status" value="1"/>
</dbReference>
<dbReference type="Pfam" id="PF03814">
    <property type="entry name" value="KdpA"/>
    <property type="match status" value="1"/>
</dbReference>
<dbReference type="PIRSF" id="PIRSF001294">
    <property type="entry name" value="K_ATPaseA"/>
    <property type="match status" value="1"/>
</dbReference>
<sequence>MTLNGWMQIALYGAVVLALVRPLGGYMTRVFDGERTLLSPALAPIERGLYRVSGIDARQEQTWLAYAGAMVLFNVAGFVLLYALLRLQALLPLNPADQAAVAPDLAFNTATSFVTNTNWQSYGGETTLTYLSQMLGLTHQNFVSAASGMAVAVALIRGFARASTKTLGSCWVDMTRATLYVLLPLCTVLALFYVSQGMPQTLSPYVEATTLEGAKQTIAVGPVASQVAIKMLGTNGGGFFNANAAHPFENPTALSNFLQMLSIFVIGAALTNVFGRMVGDERQGWAILTAMGLLFLAGVTVTYWAEANAQGVLSNLGLTGGNMEGKEVRFGIAASALFAVITTAASCGAVNAMHDSFTALGGLIPLLNMQLGEVIIGGVGAGLYGMLVFVVVAIFVAGLMVGRTPEYLGKKIEAREVKMAMLGILCLPLMMLGFTAFATVVPDGLAGPANAGPHGFSEILYAYTSAAANNGSAFGGLTANTLFYNTTLAIGMLVGRFFVKIPVLAIAGSLAAKKRLPASAGTFPTHGGLFVGLLVGVVLIIGGLTFFPALALGPVVEHFAGAAGQTFATGG</sequence>
<feature type="chain" id="PRO_1000114689" description="Potassium-transporting ATPase potassium-binding subunit">
    <location>
        <begin position="1"/>
        <end position="571"/>
    </location>
</feature>
<feature type="transmembrane region" description="Helical" evidence="1">
    <location>
        <begin position="5"/>
        <end position="25"/>
    </location>
</feature>
<feature type="transmembrane region" description="Helical" evidence="1">
    <location>
        <begin position="64"/>
        <end position="84"/>
    </location>
</feature>
<feature type="transmembrane region" description="Helical" evidence="1">
    <location>
        <begin position="136"/>
        <end position="156"/>
    </location>
</feature>
<feature type="transmembrane region" description="Helical" evidence="1">
    <location>
        <begin position="179"/>
        <end position="199"/>
    </location>
</feature>
<feature type="transmembrane region" description="Helical" evidence="1">
    <location>
        <begin position="220"/>
        <end position="240"/>
    </location>
</feature>
<feature type="transmembrane region" description="Helical" evidence="1">
    <location>
        <begin position="254"/>
        <end position="274"/>
    </location>
</feature>
<feature type="transmembrane region" description="Helical" evidence="1">
    <location>
        <begin position="285"/>
        <end position="305"/>
    </location>
</feature>
<feature type="transmembrane region" description="Helical" evidence="1">
    <location>
        <begin position="330"/>
        <end position="350"/>
    </location>
</feature>
<feature type="transmembrane region" description="Helical" evidence="1">
    <location>
        <begin position="375"/>
        <end position="395"/>
    </location>
</feature>
<feature type="transmembrane region" description="Helical" evidence="1">
    <location>
        <begin position="421"/>
        <end position="441"/>
    </location>
</feature>
<feature type="transmembrane region" description="Helical" evidence="1">
    <location>
        <begin position="488"/>
        <end position="508"/>
    </location>
</feature>
<feature type="transmembrane region" description="Helical" evidence="1">
    <location>
        <begin position="527"/>
        <end position="547"/>
    </location>
</feature>